<comment type="function">
    <text evidence="1">Non-specific DNA-binding protein that plays key roles in mitotic nuclear reassembly, chromatin organization, DNA damage response, gene expression and intrinsic immunity against foreign DNA. Contains two non-specific double-stranded DNA (dsDNA)-binding sites which promote DNA cross-bridging. Plays a key role in nuclear membrane reformation at the end of mitosis by driving formation of a single nucleus in a spindle-independent manner. Transiently cross-bridges anaphase chromosomes via its ability to bridge distant DNA sites, leading to the formation of a dense chromatin network at the chromosome ensemble surface that limits membranes to the surface. Also acts as a negative regulator of innate immune activation by restricting CGAS activity toward self-DNA upon acute loss of nuclear membrane integrity. Outcompetes CGAS for DNA-binding, thereby preventing CGAS activation and subsequent damaging autoinflammatory responses. Also involved in DNA damage response: interacts with PARP1 in response to oxidative stress, thereby inhibiting the ADP-ribosyltransferase activity of PARP1. Involved in the recognition of exogenous dsDNA in the cytosol: associates with exogenous dsDNA immediately after its appearance in the cytosol at endosome breakdown and is required to avoid autophagy. In case of poxvirus infection, has an antiviral activity by blocking viral DNA replication.</text>
</comment>
<comment type="subunit">
    <text evidence="1">Homodimer. Heterodimerizes with BANF2. Interacts with ANKLE2/LEM4, leading to decreased phosphorylation by VRK1 and promoting dephosphorylation by protein phosphatase 2A (PP2A). Binds non-specifically to double-stranded DNA, and is found as a hexamer or dodecamer upon DNA binding. Binds to LEM domain-containing nuclear proteins such as LEMD3/MAN1, TMPO/LAP2 and EMD (emerin). Interacts with ANKLE1 (via LEM domain); the interaction may favor BANF1 dimerization. Interacts with CRX and LMNA (lamin-A). Binds linker histone H1.1 and core histones H3. Interacts with LEMD2 (via LEM domain). Interacts with PARP1; interaction takes place in response to oxidative DNA damage.</text>
</comment>
<comment type="subcellular location">
    <subcellularLocation>
        <location evidence="1">Nucleus</location>
    </subcellularLocation>
    <subcellularLocation>
        <location evidence="1">Chromosome</location>
    </subcellularLocation>
    <subcellularLocation>
        <location evidence="1">Nucleus envelope</location>
    </subcellularLocation>
    <subcellularLocation>
        <location evidence="1">Cytoplasm</location>
    </subcellularLocation>
    <text evidence="1">Significantly enriched at the nuclear inner membrane, diffusely throughout the nucleus during interphase and concentrated at the chromosomes during the M-phase. The phosphorylated form (by VRK1) shows a cytoplasmic localization whereas the unphosphorylated form locates almost exclusively in the nucleus. May be included in HIV-1 virions via its interaction with viral GAG polyprotein.</text>
</comment>
<comment type="domain">
    <text evidence="1">Has a helix-hairpin-helix (HhH) structural motif conserved among proteins that bind non-specifically to DNA.</text>
</comment>
<comment type="domain">
    <text evidence="1">LEM domain proteins bind centrally on the BAF dimer.</text>
</comment>
<comment type="PTM">
    <text evidence="1">Ser-4 is the major site of phosphorylation as compared to Thr-2 and Thr-3. Phosphorylation on Thr-2; Thr-3 and Ser-4 disrupts its ability to bind DNA and reduces its ability to bind LEM domain-containing proteins. Non phosphorylated BAF seems to enhance binding between EMD and LMNA. Dephosphorylated by protein phosphatase 2A (PP2A) following interaction with ANKLE2/LEM4 during mitotic exit, leading to mitotic nuclear envelope reassembly.</text>
</comment>
<comment type="similarity">
    <text evidence="2">Belongs to the BAF family.</text>
</comment>
<proteinExistence type="inferred from homology"/>
<name>BAF_BOVIN</name>
<feature type="chain" id="PRO_0000423189" description="Barrier-to-autointegration factor">
    <location>
        <begin position="1"/>
        <end position="89"/>
    </location>
</feature>
<feature type="initiator methionine" description="Removed; alternate" evidence="1">
    <location>
        <position position="1"/>
    </location>
</feature>
<feature type="chain" id="PRO_0000221025" description="Barrier-to-autointegration factor, N-terminally processed">
    <location>
        <begin position="2"/>
        <end position="89"/>
    </location>
</feature>
<feature type="domain" description="HhH" evidence="1">
    <location>
        <begin position="20"/>
        <end position="35"/>
    </location>
</feature>
<feature type="modified residue" description="N-acetylmethionine" evidence="1">
    <location>
        <position position="1"/>
    </location>
</feature>
<feature type="modified residue" description="N-acetylthreonine; in Barrier-to-autointegration factor, N-terminally processed" evidence="1">
    <location>
        <position position="2"/>
    </location>
</feature>
<feature type="modified residue" description="Phosphothreonine; by VRK1 and VRK2" evidence="1">
    <location>
        <position position="2"/>
    </location>
</feature>
<feature type="modified residue" description="Phosphothreonine; by VRK1 and VRK2" evidence="1">
    <location>
        <position position="3"/>
    </location>
</feature>
<feature type="modified residue" description="Phosphoserine; by VRK1 and VRK2" evidence="1">
    <location>
        <position position="4"/>
    </location>
</feature>
<reference key="1">
    <citation type="submission" date="2002-07" db="EMBL/GenBank/DDBJ databases">
        <title>Barrier-to-autointegration factor (Baf) interacts with cone-rod homeobox (Crx) and represses its transactivation function.</title>
        <authorList>
            <person name="Wang X."/>
            <person name="Xu S."/>
            <person name="Rivolta C."/>
            <person name="Li L.Y."/>
            <person name="Peng G.-H."/>
            <person name="Swain P.K."/>
            <person name="Sung C.-H."/>
            <person name="Swaroop A."/>
            <person name="Berson E.L."/>
            <person name="Dryja T.P."/>
            <person name="Chen S."/>
        </authorList>
    </citation>
    <scope>NUCLEOTIDE SEQUENCE [MRNA]</scope>
</reference>
<reference key="2">
    <citation type="journal article" date="2005" name="BMC Genomics">
        <title>Characterization of 954 bovine full-CDS cDNA sequences.</title>
        <authorList>
            <person name="Harhay G.P."/>
            <person name="Sonstegard T.S."/>
            <person name="Keele J.W."/>
            <person name="Heaton M.P."/>
            <person name="Clawson M.L."/>
            <person name="Snelling W.M."/>
            <person name="Wiedmann R.T."/>
            <person name="Van Tassell C.P."/>
            <person name="Smith T.P.L."/>
        </authorList>
    </citation>
    <scope>NUCLEOTIDE SEQUENCE [LARGE SCALE MRNA]</scope>
</reference>
<gene>
    <name type="primary">BANF1</name>
    <name type="synonym">BAF</name>
</gene>
<organism>
    <name type="scientific">Bos taurus</name>
    <name type="common">Bovine</name>
    <dbReference type="NCBI Taxonomy" id="9913"/>
    <lineage>
        <taxon>Eukaryota</taxon>
        <taxon>Metazoa</taxon>
        <taxon>Chordata</taxon>
        <taxon>Craniata</taxon>
        <taxon>Vertebrata</taxon>
        <taxon>Euteleostomi</taxon>
        <taxon>Mammalia</taxon>
        <taxon>Eutheria</taxon>
        <taxon>Laurasiatheria</taxon>
        <taxon>Artiodactyla</taxon>
        <taxon>Ruminantia</taxon>
        <taxon>Pecora</taxon>
        <taxon>Bovidae</taxon>
        <taxon>Bovinae</taxon>
        <taxon>Bos</taxon>
    </lineage>
</organism>
<accession>P61283</accession>
<accession>Q5E9E5</accession>
<dbReference type="EMBL" id="AF529228">
    <property type="protein sequence ID" value="AAQ09227.1"/>
    <property type="molecule type" value="mRNA"/>
</dbReference>
<dbReference type="EMBL" id="BT020975">
    <property type="protein sequence ID" value="AAX08992.1"/>
    <property type="molecule type" value="mRNA"/>
</dbReference>
<dbReference type="RefSeq" id="NP_892033.1">
    <property type="nucleotide sequence ID" value="NM_182988.3"/>
</dbReference>
<dbReference type="SMR" id="P61283"/>
<dbReference type="FunCoup" id="P61283">
    <property type="interactions" value="2638"/>
</dbReference>
<dbReference type="STRING" id="9913.ENSBTAP00000067190"/>
<dbReference type="PaxDb" id="9913-ENSBTAP00000042612"/>
<dbReference type="PeptideAtlas" id="P61283"/>
<dbReference type="Ensembl" id="ENSBTAT00000045202.3">
    <property type="protein sequence ID" value="ENSBTAP00000042612.2"/>
    <property type="gene ID" value="ENSBTAG00000031875.5"/>
</dbReference>
<dbReference type="GeneID" id="360196"/>
<dbReference type="KEGG" id="bta:360196"/>
<dbReference type="CTD" id="8815"/>
<dbReference type="VEuPathDB" id="HostDB:ENSBTAG00000031875"/>
<dbReference type="VGNC" id="VGNC:54634">
    <property type="gene designation" value="BANF1"/>
</dbReference>
<dbReference type="eggNOG" id="KOG4233">
    <property type="taxonomic scope" value="Eukaryota"/>
</dbReference>
<dbReference type="GeneTree" id="ENSGT00390000018613"/>
<dbReference type="HOGENOM" id="CLU_167806_0_0_1"/>
<dbReference type="InParanoid" id="P61283"/>
<dbReference type="OrthoDB" id="9997163at2759"/>
<dbReference type="TreeFam" id="TF315060"/>
<dbReference type="Reactome" id="R-BTA-2980766">
    <property type="pathway name" value="Nuclear Envelope Breakdown"/>
</dbReference>
<dbReference type="Reactome" id="R-BTA-2995383">
    <property type="pathway name" value="Initiation of Nuclear Envelope (NE) Reformation"/>
</dbReference>
<dbReference type="Proteomes" id="UP000009136">
    <property type="component" value="Chromosome 29"/>
</dbReference>
<dbReference type="Bgee" id="ENSBTAG00000031875">
    <property type="expression patterns" value="Expressed in oocyte and 105 other cell types or tissues"/>
</dbReference>
<dbReference type="GO" id="GO:0000785">
    <property type="term" value="C:chromatin"/>
    <property type="evidence" value="ECO:0000250"/>
    <property type="project" value="UniProtKB"/>
</dbReference>
<dbReference type="GO" id="GO:0000793">
    <property type="term" value="C:condensed chromosome"/>
    <property type="evidence" value="ECO:0000318"/>
    <property type="project" value="GO_Central"/>
</dbReference>
<dbReference type="GO" id="GO:0005737">
    <property type="term" value="C:cytoplasm"/>
    <property type="evidence" value="ECO:0007669"/>
    <property type="project" value="UniProtKB-SubCell"/>
</dbReference>
<dbReference type="GO" id="GO:0005635">
    <property type="term" value="C:nuclear envelope"/>
    <property type="evidence" value="ECO:0007669"/>
    <property type="project" value="UniProtKB-SubCell"/>
</dbReference>
<dbReference type="GO" id="GO:0005634">
    <property type="term" value="C:nucleus"/>
    <property type="evidence" value="ECO:0000318"/>
    <property type="project" value="GO_Central"/>
</dbReference>
<dbReference type="GO" id="GO:0003677">
    <property type="term" value="F:DNA binding"/>
    <property type="evidence" value="ECO:0000318"/>
    <property type="project" value="GO_Central"/>
</dbReference>
<dbReference type="GO" id="GO:0006325">
    <property type="term" value="P:chromatin organization"/>
    <property type="evidence" value="ECO:0000250"/>
    <property type="project" value="UniProtKB"/>
</dbReference>
<dbReference type="GO" id="GO:0051276">
    <property type="term" value="P:chromosome organization"/>
    <property type="evidence" value="ECO:0000318"/>
    <property type="project" value="GO_Central"/>
</dbReference>
<dbReference type="GO" id="GO:0007084">
    <property type="term" value="P:mitotic nuclear membrane reassembly"/>
    <property type="evidence" value="ECO:0000250"/>
    <property type="project" value="UniProtKB"/>
</dbReference>
<dbReference type="GO" id="GO:0010836">
    <property type="term" value="P:negative regulation of protein ADP-ribosylation"/>
    <property type="evidence" value="ECO:0000250"/>
    <property type="project" value="UniProtKB"/>
</dbReference>
<dbReference type="GO" id="GO:0032480">
    <property type="term" value="P:negative regulation of type I interferon production"/>
    <property type="evidence" value="ECO:0000250"/>
    <property type="project" value="UniProtKB"/>
</dbReference>
<dbReference type="GO" id="GO:0006979">
    <property type="term" value="P:response to oxidative stress"/>
    <property type="evidence" value="ECO:0000250"/>
    <property type="project" value="UniProtKB"/>
</dbReference>
<dbReference type="FunFam" id="1.10.150.40:FF:000001">
    <property type="entry name" value="Barrier-to-autointegration factor B"/>
    <property type="match status" value="1"/>
</dbReference>
<dbReference type="Gene3D" id="1.10.150.40">
    <property type="entry name" value="Barrier-to-autointegration factor, BAF"/>
    <property type="match status" value="1"/>
</dbReference>
<dbReference type="InterPro" id="IPR051387">
    <property type="entry name" value="BAF"/>
</dbReference>
<dbReference type="InterPro" id="IPR004122">
    <property type="entry name" value="BAF_prot"/>
</dbReference>
<dbReference type="InterPro" id="IPR036617">
    <property type="entry name" value="BAF_sf"/>
</dbReference>
<dbReference type="PANTHER" id="PTHR47507">
    <property type="entry name" value="BARRIER TO AUTOINTEGRATION FACTOR 2"/>
    <property type="match status" value="1"/>
</dbReference>
<dbReference type="PANTHER" id="PTHR47507:SF7">
    <property type="entry name" value="BARRIER-TO-AUTOINTEGRATION FACTOR"/>
    <property type="match status" value="1"/>
</dbReference>
<dbReference type="Pfam" id="PF02961">
    <property type="entry name" value="SAM_BAF"/>
    <property type="match status" value="1"/>
</dbReference>
<dbReference type="SMART" id="SM01023">
    <property type="entry name" value="BAF"/>
    <property type="match status" value="1"/>
</dbReference>
<dbReference type="SUPFAM" id="SSF47798">
    <property type="entry name" value="Barrier-to-autointegration factor, BAF"/>
    <property type="match status" value="1"/>
</dbReference>
<evidence type="ECO:0000250" key="1">
    <source>
        <dbReference type="UniProtKB" id="O75531"/>
    </source>
</evidence>
<evidence type="ECO:0000305" key="2"/>
<sequence length="89" mass="10059">MTTSQKHRDFVAEPMGEKPVGSLAGIGEVLGKKLEERGFDKAYVVLGQFLVLKKDEDLFREWLKDTCGANAKQSRDCFGCLREWCDAFL</sequence>
<protein>
    <recommendedName>
        <fullName>Barrier-to-autointegration factor</fullName>
    </recommendedName>
    <component>
        <recommendedName>
            <fullName>Barrier-to-autointegration factor, N-terminally processed</fullName>
        </recommendedName>
    </component>
</protein>
<keyword id="KW-0007">Acetylation</keyword>
<keyword id="KW-0158">Chromosome</keyword>
<keyword id="KW-0963">Cytoplasm</keyword>
<keyword id="KW-0238">DNA-binding</keyword>
<keyword id="KW-0539">Nucleus</keyword>
<keyword id="KW-0597">Phosphoprotein</keyword>
<keyword id="KW-1185">Reference proteome</keyword>